<keyword id="KW-0963">Cytoplasm</keyword>
<keyword id="KW-0903">Direct protein sequencing</keyword>
<keyword id="KW-0560">Oxidoreductase</keyword>
<keyword id="KW-1185">Reference proteome</keyword>
<keyword id="KW-0712">Selenocysteine</keyword>
<organism>
    <name type="scientific">Acetoanaerobium sticklandii (strain ATCC 12662 / DSM 519 / JCM 1433 / CCUG 9281 / NCIMB 10654 / HF)</name>
    <name type="common">Clostridium sticklandii</name>
    <dbReference type="NCBI Taxonomy" id="499177"/>
    <lineage>
        <taxon>Bacteria</taxon>
        <taxon>Bacillati</taxon>
        <taxon>Bacillota</taxon>
        <taxon>Clostridia</taxon>
        <taxon>Peptostreptococcales</taxon>
        <taxon>Filifactoraceae</taxon>
        <taxon>Acetoanaerobium</taxon>
    </lineage>
</organism>
<gene>
    <name type="primary">prdB</name>
    <name type="ordered locus">CLOST_2232</name>
</gene>
<dbReference type="EC" id="1.21.4.1" evidence="1"/>
<dbReference type="EMBL" id="AJ130879">
    <property type="protein sequence ID" value="CAB38127.2"/>
    <property type="molecule type" value="Genomic_DNA"/>
</dbReference>
<dbReference type="EMBL" id="FP565809">
    <property type="protein sequence ID" value="CBH22351.1"/>
    <property type="molecule type" value="Genomic_DNA"/>
</dbReference>
<dbReference type="STRING" id="1511.CLOST_2232"/>
<dbReference type="KEGG" id="cst:CLOST_2232"/>
<dbReference type="eggNOG" id="COG1978">
    <property type="taxonomic scope" value="Bacteria"/>
</dbReference>
<dbReference type="HOGENOM" id="CLU_085018_0_0_9"/>
<dbReference type="BioCyc" id="MetaCyc:PRDBST-MONOMER"/>
<dbReference type="Proteomes" id="UP000007041">
    <property type="component" value="Chromosome"/>
</dbReference>
<dbReference type="GO" id="GO:0005737">
    <property type="term" value="C:cytoplasm"/>
    <property type="evidence" value="ECO:0007669"/>
    <property type="project" value="UniProtKB-SubCell"/>
</dbReference>
<dbReference type="GO" id="GO:0050002">
    <property type="term" value="F:D-proline reductase activity"/>
    <property type="evidence" value="ECO:0007669"/>
    <property type="project" value="UniProtKB-EC"/>
</dbReference>
<dbReference type="InterPro" id="IPR022787">
    <property type="entry name" value="D_pro_red_PrdB"/>
</dbReference>
<dbReference type="InterPro" id="IPR010187">
    <property type="entry name" value="Various_sel_PB"/>
</dbReference>
<dbReference type="NCBIfam" id="TIGR04483">
    <property type="entry name" value="D_pro_red_PrdB"/>
    <property type="match status" value="1"/>
</dbReference>
<dbReference type="NCBIfam" id="TIGR01918">
    <property type="entry name" value="various_sel_PB"/>
    <property type="match status" value="1"/>
</dbReference>
<dbReference type="Pfam" id="PF07355">
    <property type="entry name" value="GRDB"/>
    <property type="match status" value="1"/>
</dbReference>
<reference key="1">
    <citation type="journal article" date="1999" name="J. Biol. Chem.">
        <title>Identification of D-proline reductase from Clostridium sticklandii as a selenoenzyme and indications for a catalytically active pyruvoyl group derived from a cysteine residue by cleavage of a proprotein.</title>
        <authorList>
            <person name="Kabisch U.C."/>
            <person name="Graentzdoerffer A."/>
            <person name="Schierhorn A."/>
            <person name="Ruecknagel K.P."/>
            <person name="Andreesen J.R."/>
            <person name="Pich A."/>
        </authorList>
    </citation>
    <scope>NUCLEOTIDE SEQUENCE [GENOMIC DNA]</scope>
    <scope>PROTEIN SEQUENCE OF 1-19; 51-80; 87-102; 140-161 AND 231-242</scope>
    <scope>SELENOCYSTEINE AT SEC-152</scope>
    <scope>SUBUNIT</scope>
    <scope>SUBCELLULAR LOCATION</scope>
    <scope>FUNCTION</scope>
    <scope>CATALYTIC ACTIVITY</scope>
    <source>
        <strain>ATCC 12662 / DSM 519 / JCM 1433 / CCUG 9281 / NCIMB 10654 / HF</strain>
    </source>
</reference>
<reference key="2">
    <citation type="journal article" date="2010" name="BMC Genomics">
        <title>Clostridium sticklandii, a specialist in amino acid degradation:revisiting its metabolism through its genome sequence.</title>
        <authorList>
            <person name="Fonknechten N."/>
            <person name="Chaussonnerie S."/>
            <person name="Tricot S."/>
            <person name="Lajus A."/>
            <person name="Andreesen J.R."/>
            <person name="Perchat N."/>
            <person name="Pelletier E."/>
            <person name="Gouyvenoux M."/>
            <person name="Barbe V."/>
            <person name="Salanoubat M."/>
            <person name="Le Paslier D."/>
            <person name="Weissenbach J."/>
            <person name="Cohen G.N."/>
            <person name="Kreimeyer A."/>
        </authorList>
    </citation>
    <scope>NUCLEOTIDE SEQUENCE [LARGE SCALE GENOMIC DNA]</scope>
    <source>
        <strain>ATCC 12662 / DSM 519 / JCM 1433 / CCUG 9281 / NCIMB 10654 / HF</strain>
    </source>
</reference>
<proteinExistence type="evidence at protein level"/>
<accession>Q9Z4Q7</accession>
<accession>E3PTZ7</accession>
<name>PRDB_ACESD</name>
<feature type="chain" id="PRO_0000240012" description="D-proline reductase subunit gamma">
    <location>
        <begin position="1"/>
        <end position="242"/>
    </location>
</feature>
<feature type="active site" description="Nucleophile" evidence="2">
    <location>
        <position position="152"/>
    </location>
</feature>
<feature type="non-standard amino acid" description="Selenocysteine">
    <location>
        <position position="152"/>
    </location>
</feature>
<evidence type="ECO:0000269" key="1">
    <source>
    </source>
</evidence>
<evidence type="ECO:0000305" key="2"/>
<sequence length="242" mass="25812">MSDLTVVKGLQSEIYVPITPPPVWTPVTKELKDMTVALVTAAGVHMKADKRFNLAGDFSFRVIPGDASVNDMMVSHGGYDNGDVNKDINCMFPIDPMRTLAKEGFIKALAPINIGFMGGGGDQKKFSEETGPEIARQLKEEGVDAVLLTAGUGTCHRSAVIVQRAIEESGIPTIIIAALPPVVRQNGTPRAVAPLVPMGANAGEPNNPEMQKAICTDSLKQLVEIPSAGKIVPLPYEYVAKV</sequence>
<comment type="function">
    <text evidence="1">D-proline reductase catalyzes the reductive cleavage of a C-N bond in D-proline resulting in the formation of 5-aminovalerate. The alpha subunit has been shown to bind D-proline, presumably via the pyruvoyl group.</text>
</comment>
<comment type="catalytic activity">
    <reaction evidence="1">
        <text>[PrdC protein]-Se-L-selenocysteinyl-S-L-cysteine + 5-aminopentanoate = [PrdC protein]-L-selenocysteine/L-cysteine + D-proline</text>
        <dbReference type="Rhea" id="RHEA:12737"/>
        <dbReference type="Rhea" id="RHEA-COMP:14983"/>
        <dbReference type="Rhea" id="RHEA-COMP:14984"/>
        <dbReference type="ChEBI" id="CHEBI:29950"/>
        <dbReference type="ChEBI" id="CHEBI:30000"/>
        <dbReference type="ChEBI" id="CHEBI:57726"/>
        <dbReference type="ChEBI" id="CHEBI:142235"/>
        <dbReference type="ChEBI" id="CHEBI:356010"/>
        <dbReference type="EC" id="1.21.4.1"/>
    </reaction>
</comment>
<comment type="subunit">
    <text evidence="1">Consists of 3 subunits of 23, 26 and 45 kDa (alpha, gamma and beta respectively). The molecular weight of the complex is approximately 870 kDa, suggesting a decameric structure, if all 3 subunits are present in equal stoichiometry.</text>
</comment>
<comment type="subcellular location">
    <subcellularLocation>
        <location evidence="1">Cytoplasm</location>
    </subcellularLocation>
</comment>
<comment type="PTM">
    <text>This subunit is carbonylated in vitro on an unidentified residue.</text>
</comment>
<comment type="miscellaneous">
    <text>The reaction mechanism first involves the formation of an adduct (and not a Schiff base) between the nitrogen of proline and the pyruvoyl group of the alpha subunit. The selenol anion of selenocysteine in PrdB nucleophilically attacks the alpha-carbon, resulting in cleavage of the N-C bond of the proline ring. This intermediate is then transformed to the oxidized gamma subunit containing a mixed selenide/sulfide group and to the 5-aminovalerate adduct of the alpha subunit. The final product, 5-aminovalerate, is formed by hydrolysis. Subsequently, the selenide-sulfide group of PrdB is reduced, but the natural electron donating system for D-proline reductase is unknown.</text>
</comment>
<protein>
    <recommendedName>
        <fullName>D-proline reductase subunit gamma</fullName>
        <ecNumber evidence="1">1.21.4.1</ecNumber>
    </recommendedName>
    <alternativeName>
        <fullName>D-proline reductase 26 kDa subunit</fullName>
    </alternativeName>
</protein>